<proteinExistence type="inferred from homology"/>
<protein>
    <recommendedName>
        <fullName>tRNA-dihydrouridine(47) synthase [NAD(P)(+)]</fullName>
        <ecNumber evidence="1">1.3.1.89</ecNumber>
    </recommendedName>
    <alternativeName>
        <fullName>mRNA-dihydrouridine synthase DUS3</fullName>
        <ecNumber evidence="3">1.3.1.-</ecNumber>
    </alternativeName>
    <alternativeName>
        <fullName>tRNA-dihydrouridine synthase 3</fullName>
    </alternativeName>
</protein>
<name>DUS3_DEBHA</name>
<gene>
    <name type="primary">DUS3</name>
    <name type="ordered locus">DEHA2D11286g</name>
</gene>
<comment type="function">
    <text evidence="1 3">Catalyzes the synthesis of dihydrouridine, a modified base found in the D-loop of most tRNAs. Specifically modifies U47 in cytoplasmic tRNAs (By similarity). Catalyzes the synthesis of dihydrouridine in some mRNAs, thereby affecting their translation (By similarity).</text>
</comment>
<comment type="catalytic activity">
    <reaction evidence="1">
        <text>5,6-dihydrouridine(47) in tRNA + NAD(+) = uridine(47) in tRNA + NADH + H(+)</text>
        <dbReference type="Rhea" id="RHEA:53364"/>
        <dbReference type="Rhea" id="RHEA-COMP:13539"/>
        <dbReference type="Rhea" id="RHEA-COMP:13540"/>
        <dbReference type="ChEBI" id="CHEBI:15378"/>
        <dbReference type="ChEBI" id="CHEBI:57540"/>
        <dbReference type="ChEBI" id="CHEBI:57945"/>
        <dbReference type="ChEBI" id="CHEBI:65315"/>
        <dbReference type="ChEBI" id="CHEBI:74443"/>
        <dbReference type="EC" id="1.3.1.89"/>
    </reaction>
    <physiologicalReaction direction="right-to-left" evidence="1">
        <dbReference type="Rhea" id="RHEA:53366"/>
    </physiologicalReaction>
</comment>
<comment type="catalytic activity">
    <reaction evidence="1">
        <text>5,6-dihydrouridine(47) in tRNA + NADP(+) = uridine(47) in tRNA + NADPH + H(+)</text>
        <dbReference type="Rhea" id="RHEA:53360"/>
        <dbReference type="Rhea" id="RHEA-COMP:13539"/>
        <dbReference type="Rhea" id="RHEA-COMP:13540"/>
        <dbReference type="ChEBI" id="CHEBI:15378"/>
        <dbReference type="ChEBI" id="CHEBI:57783"/>
        <dbReference type="ChEBI" id="CHEBI:58349"/>
        <dbReference type="ChEBI" id="CHEBI:65315"/>
        <dbReference type="ChEBI" id="CHEBI:74443"/>
        <dbReference type="EC" id="1.3.1.89"/>
    </reaction>
    <physiologicalReaction direction="right-to-left" evidence="1">
        <dbReference type="Rhea" id="RHEA:53362"/>
    </physiologicalReaction>
</comment>
<comment type="catalytic activity">
    <reaction evidence="3">
        <text>a 5,6-dihydrouridine in mRNA + NAD(+) = a uridine in mRNA + NADH + H(+)</text>
        <dbReference type="Rhea" id="RHEA:69851"/>
        <dbReference type="Rhea" id="RHEA-COMP:14658"/>
        <dbReference type="Rhea" id="RHEA-COMP:17789"/>
        <dbReference type="ChEBI" id="CHEBI:15378"/>
        <dbReference type="ChEBI" id="CHEBI:57540"/>
        <dbReference type="ChEBI" id="CHEBI:57945"/>
        <dbReference type="ChEBI" id="CHEBI:65315"/>
        <dbReference type="ChEBI" id="CHEBI:74443"/>
    </reaction>
    <physiologicalReaction direction="right-to-left" evidence="3">
        <dbReference type="Rhea" id="RHEA:69853"/>
    </physiologicalReaction>
</comment>
<comment type="catalytic activity">
    <reaction evidence="3">
        <text>a 5,6-dihydrouridine in mRNA + NADP(+) = a uridine in mRNA + NADPH + H(+)</text>
        <dbReference type="Rhea" id="RHEA:69855"/>
        <dbReference type="Rhea" id="RHEA-COMP:14658"/>
        <dbReference type="Rhea" id="RHEA-COMP:17789"/>
        <dbReference type="ChEBI" id="CHEBI:15378"/>
        <dbReference type="ChEBI" id="CHEBI:57783"/>
        <dbReference type="ChEBI" id="CHEBI:58349"/>
        <dbReference type="ChEBI" id="CHEBI:65315"/>
        <dbReference type="ChEBI" id="CHEBI:74443"/>
    </reaction>
    <physiologicalReaction direction="right-to-left" evidence="3">
        <dbReference type="Rhea" id="RHEA:69857"/>
    </physiologicalReaction>
</comment>
<comment type="cofactor">
    <cofactor evidence="2">
        <name>FMN</name>
        <dbReference type="ChEBI" id="CHEBI:58210"/>
    </cofactor>
</comment>
<comment type="subcellular location">
    <subcellularLocation>
        <location evidence="1">Cytoplasm</location>
    </subcellularLocation>
    <subcellularLocation>
        <location evidence="1">Nucleus</location>
    </subcellularLocation>
</comment>
<comment type="similarity">
    <text evidence="6">Belongs to the Dus family. Dus3 subfamily.</text>
</comment>
<evidence type="ECO:0000250" key="1">
    <source>
        <dbReference type="UniProtKB" id="Q06053"/>
    </source>
</evidence>
<evidence type="ECO:0000250" key="2">
    <source>
        <dbReference type="UniProtKB" id="Q5SMC7"/>
    </source>
</evidence>
<evidence type="ECO:0000250" key="3">
    <source>
        <dbReference type="UniProtKB" id="Q9UTH9"/>
    </source>
</evidence>
<evidence type="ECO:0000255" key="4">
    <source>
        <dbReference type="PROSITE-ProRule" id="PRU00723"/>
    </source>
</evidence>
<evidence type="ECO:0000256" key="5">
    <source>
        <dbReference type="SAM" id="MobiDB-lite"/>
    </source>
</evidence>
<evidence type="ECO:0000305" key="6"/>
<feature type="chain" id="PRO_0000330238" description="tRNA-dihydrouridine(47) synthase [NAD(P)(+)]">
    <location>
        <begin position="1"/>
        <end position="622"/>
    </location>
</feature>
<feature type="zinc finger region" description="C3H1-type 1" evidence="4">
    <location>
        <begin position="93"/>
        <end position="124"/>
    </location>
</feature>
<feature type="zinc finger region" description="C3H1-type 2" evidence="4">
    <location>
        <begin position="137"/>
        <end position="160"/>
    </location>
</feature>
<feature type="region of interest" description="Disordered" evidence="5">
    <location>
        <begin position="1"/>
        <end position="92"/>
    </location>
</feature>
<feature type="compositionally biased region" description="Basic and acidic residues" evidence="5">
    <location>
        <begin position="1"/>
        <end position="31"/>
    </location>
</feature>
<feature type="compositionally biased region" description="Basic and acidic residues" evidence="5">
    <location>
        <begin position="50"/>
        <end position="72"/>
    </location>
</feature>
<feature type="compositionally biased region" description="Basic residues" evidence="5">
    <location>
        <begin position="74"/>
        <end position="83"/>
    </location>
</feature>
<feature type="active site" description="Proton donor" evidence="2">
    <location>
        <position position="347"/>
    </location>
</feature>
<feature type="binding site" evidence="2">
    <location>
        <begin position="260"/>
        <end position="262"/>
    </location>
    <ligand>
        <name>FMN</name>
        <dbReference type="ChEBI" id="CHEBI:58210"/>
    </ligand>
</feature>
<feature type="binding site" evidence="2">
    <location>
        <position position="315"/>
    </location>
    <ligand>
        <name>FMN</name>
        <dbReference type="ChEBI" id="CHEBI:58210"/>
    </ligand>
</feature>
<feature type="binding site" evidence="2">
    <location>
        <position position="387"/>
    </location>
    <ligand>
        <name>FMN</name>
        <dbReference type="ChEBI" id="CHEBI:58210"/>
    </ligand>
</feature>
<feature type="binding site" evidence="2">
    <location>
        <position position="418"/>
    </location>
    <ligand>
        <name>FMN</name>
        <dbReference type="ChEBI" id="CHEBI:58210"/>
    </ligand>
</feature>
<feature type="binding site" evidence="2">
    <location>
        <begin position="466"/>
        <end position="468"/>
    </location>
    <ligand>
        <name>FMN</name>
        <dbReference type="ChEBI" id="CHEBI:58210"/>
    </ligand>
</feature>
<feature type="binding site" evidence="2">
    <location>
        <begin position="490"/>
        <end position="491"/>
    </location>
    <ligand>
        <name>FMN</name>
        <dbReference type="ChEBI" id="CHEBI:58210"/>
    </ligand>
</feature>
<sequence>MSNIPEKRPSEQPDEAEAKKPHIEPRHDHFAKGIAPIKAEFIVENPDVPVEEKYINDDEAEGGDRQEEEGGKGGKNKKRRGQNKKRDLKQQHEEVRLCSSLLDPENPKECRFGAENCRNSHNVEEYISSKPEDIEGNCPVYTAIGYCPAGLKCRWLHSHYNKETHKLLKDLEQVENAKALNNYEVNKITPDKKTSLQKKKYTFEYASQMIPYLDSLVQNEANIEKAQEQAKENQSTFVEAPFKVAEKKKLNLRDAKIVSPLTTVGNLPYRRLMKTLGADVTYSEMALSVPLLQGTNAEWALPKAHRTEYPGYGVQIATSKHWAAAKAAEAIYKEATHVSELNLNCGCPIDLLYRQGQGSALMEQPARLLRILKGMNASSGDIPVTVKIRTGTKENKNTAKALVERILSENEVAAITLHGRSRQQRYTKEADWSYVQDVANIVQDWNNKKEDNKELRDTQPTCFVGNGDVYTHEDWYNAVNIPGVDSVMVARGALIKPWIFEEVEAQQYLDKSSTERLEMIGQYAKFAIEHWGSDEYGVGLARRFMCEFLGFTHRYIPVGILERLPPKLNQRPPQWKGRDELETLLGSTDYKDWIKITEMFLGKAGPNFQFVPKHKSNAYEKS</sequence>
<accession>Q6BS64</accession>
<reference key="1">
    <citation type="journal article" date="2004" name="Nature">
        <title>Genome evolution in yeasts.</title>
        <authorList>
            <person name="Dujon B."/>
            <person name="Sherman D."/>
            <person name="Fischer G."/>
            <person name="Durrens P."/>
            <person name="Casaregola S."/>
            <person name="Lafontaine I."/>
            <person name="de Montigny J."/>
            <person name="Marck C."/>
            <person name="Neuveglise C."/>
            <person name="Talla E."/>
            <person name="Goffard N."/>
            <person name="Frangeul L."/>
            <person name="Aigle M."/>
            <person name="Anthouard V."/>
            <person name="Babour A."/>
            <person name="Barbe V."/>
            <person name="Barnay S."/>
            <person name="Blanchin S."/>
            <person name="Beckerich J.-M."/>
            <person name="Beyne E."/>
            <person name="Bleykasten C."/>
            <person name="Boisrame A."/>
            <person name="Boyer J."/>
            <person name="Cattolico L."/>
            <person name="Confanioleri F."/>
            <person name="de Daruvar A."/>
            <person name="Despons L."/>
            <person name="Fabre E."/>
            <person name="Fairhead C."/>
            <person name="Ferry-Dumazet H."/>
            <person name="Groppi A."/>
            <person name="Hantraye F."/>
            <person name="Hennequin C."/>
            <person name="Jauniaux N."/>
            <person name="Joyet P."/>
            <person name="Kachouri R."/>
            <person name="Kerrest A."/>
            <person name="Koszul R."/>
            <person name="Lemaire M."/>
            <person name="Lesur I."/>
            <person name="Ma L."/>
            <person name="Muller H."/>
            <person name="Nicaud J.-M."/>
            <person name="Nikolski M."/>
            <person name="Oztas S."/>
            <person name="Ozier-Kalogeropoulos O."/>
            <person name="Pellenz S."/>
            <person name="Potier S."/>
            <person name="Richard G.-F."/>
            <person name="Straub M.-L."/>
            <person name="Suleau A."/>
            <person name="Swennen D."/>
            <person name="Tekaia F."/>
            <person name="Wesolowski-Louvel M."/>
            <person name="Westhof E."/>
            <person name="Wirth B."/>
            <person name="Zeniou-Meyer M."/>
            <person name="Zivanovic Y."/>
            <person name="Bolotin-Fukuhara M."/>
            <person name="Thierry A."/>
            <person name="Bouchier C."/>
            <person name="Caudron B."/>
            <person name="Scarpelli C."/>
            <person name="Gaillardin C."/>
            <person name="Weissenbach J."/>
            <person name="Wincker P."/>
            <person name="Souciet J.-L."/>
        </authorList>
    </citation>
    <scope>NUCLEOTIDE SEQUENCE [LARGE SCALE GENOMIC DNA]</scope>
    <source>
        <strain>ATCC 36239 / CBS 767 / BCRC 21394 / JCM 1990 / NBRC 0083 / IGC 2968</strain>
    </source>
</reference>
<organism>
    <name type="scientific">Debaryomyces hansenii (strain ATCC 36239 / CBS 767 / BCRC 21394 / JCM 1990 / NBRC 0083 / IGC 2968)</name>
    <name type="common">Yeast</name>
    <name type="synonym">Torulaspora hansenii</name>
    <dbReference type="NCBI Taxonomy" id="284592"/>
    <lineage>
        <taxon>Eukaryota</taxon>
        <taxon>Fungi</taxon>
        <taxon>Dikarya</taxon>
        <taxon>Ascomycota</taxon>
        <taxon>Saccharomycotina</taxon>
        <taxon>Pichiomycetes</taxon>
        <taxon>Debaryomycetaceae</taxon>
        <taxon>Debaryomyces</taxon>
    </lineage>
</organism>
<keyword id="KW-0963">Cytoplasm</keyword>
<keyword id="KW-0285">Flavoprotein</keyword>
<keyword id="KW-0288">FMN</keyword>
<keyword id="KW-0479">Metal-binding</keyword>
<keyword id="KW-0507">mRNA processing</keyword>
<keyword id="KW-0520">NAD</keyword>
<keyword id="KW-0521">NADP</keyword>
<keyword id="KW-0539">Nucleus</keyword>
<keyword id="KW-0560">Oxidoreductase</keyword>
<keyword id="KW-1185">Reference proteome</keyword>
<keyword id="KW-0677">Repeat</keyword>
<keyword id="KW-0819">tRNA processing</keyword>
<keyword id="KW-0862">Zinc</keyword>
<keyword id="KW-0863">Zinc-finger</keyword>
<dbReference type="EC" id="1.3.1.89" evidence="1"/>
<dbReference type="EC" id="1.3.1.-" evidence="3"/>
<dbReference type="EMBL" id="CR382136">
    <property type="protein sequence ID" value="CAG87117.1"/>
    <property type="molecule type" value="Genomic_DNA"/>
</dbReference>
<dbReference type="RefSeq" id="XP_458956.1">
    <property type="nucleotide sequence ID" value="XM_458956.1"/>
</dbReference>
<dbReference type="SMR" id="Q6BS64"/>
<dbReference type="FunCoup" id="Q6BS64">
    <property type="interactions" value="951"/>
</dbReference>
<dbReference type="STRING" id="284592.Q6BS64"/>
<dbReference type="GeneID" id="2901483"/>
<dbReference type="KEGG" id="dha:DEHA2D11286g"/>
<dbReference type="VEuPathDB" id="FungiDB:DEHA2D11286g"/>
<dbReference type="eggNOG" id="KOG2333">
    <property type="taxonomic scope" value="Eukaryota"/>
</dbReference>
<dbReference type="HOGENOM" id="CLU_013299_7_3_1"/>
<dbReference type="InParanoid" id="Q6BS64"/>
<dbReference type="OMA" id="WSYIAEC"/>
<dbReference type="OrthoDB" id="259935at2759"/>
<dbReference type="Proteomes" id="UP000000599">
    <property type="component" value="Chromosome D"/>
</dbReference>
<dbReference type="GO" id="GO:0005737">
    <property type="term" value="C:cytoplasm"/>
    <property type="evidence" value="ECO:0007669"/>
    <property type="project" value="UniProtKB-SubCell"/>
</dbReference>
<dbReference type="GO" id="GO:0034399">
    <property type="term" value="C:nuclear periphery"/>
    <property type="evidence" value="ECO:0007669"/>
    <property type="project" value="EnsemblFungi"/>
</dbReference>
<dbReference type="GO" id="GO:0050660">
    <property type="term" value="F:flavin adenine dinucleotide binding"/>
    <property type="evidence" value="ECO:0007669"/>
    <property type="project" value="InterPro"/>
</dbReference>
<dbReference type="GO" id="GO:0106414">
    <property type="term" value="F:mRNA dihydrouridine synthase activity"/>
    <property type="evidence" value="ECO:0007669"/>
    <property type="project" value="RHEA"/>
</dbReference>
<dbReference type="GO" id="GO:0003723">
    <property type="term" value="F:RNA binding"/>
    <property type="evidence" value="ECO:0007669"/>
    <property type="project" value="TreeGrafter"/>
</dbReference>
<dbReference type="GO" id="GO:0102265">
    <property type="term" value="F:tRNA-dihydrouridine47 synthase activity"/>
    <property type="evidence" value="ECO:0007669"/>
    <property type="project" value="UniProtKB-EC"/>
</dbReference>
<dbReference type="GO" id="GO:0008270">
    <property type="term" value="F:zinc ion binding"/>
    <property type="evidence" value="ECO:0007669"/>
    <property type="project" value="UniProtKB-KW"/>
</dbReference>
<dbReference type="GO" id="GO:0006397">
    <property type="term" value="P:mRNA processing"/>
    <property type="evidence" value="ECO:0007669"/>
    <property type="project" value="UniProtKB-KW"/>
</dbReference>
<dbReference type="CDD" id="cd02801">
    <property type="entry name" value="DUS_like_FMN"/>
    <property type="match status" value="1"/>
</dbReference>
<dbReference type="FunFam" id="3.20.20.70:FF:000145">
    <property type="entry name" value="tRNA-dihydrouridine(47) synthase [NAD(P)(+)]"/>
    <property type="match status" value="1"/>
</dbReference>
<dbReference type="Gene3D" id="3.20.20.70">
    <property type="entry name" value="Aldolase class I"/>
    <property type="match status" value="1"/>
</dbReference>
<dbReference type="Gene3D" id="4.10.1000.10">
    <property type="entry name" value="Zinc finger, CCCH-type"/>
    <property type="match status" value="1"/>
</dbReference>
<dbReference type="InterPro" id="IPR013785">
    <property type="entry name" value="Aldolase_TIM"/>
</dbReference>
<dbReference type="InterPro" id="IPR035587">
    <property type="entry name" value="DUS-like_FMN-bd"/>
</dbReference>
<dbReference type="InterPro" id="IPR018517">
    <property type="entry name" value="tRNA_hU_synthase_CS"/>
</dbReference>
<dbReference type="InterPro" id="IPR000571">
    <property type="entry name" value="Znf_CCCH"/>
</dbReference>
<dbReference type="PANTHER" id="PTHR45846">
    <property type="entry name" value="TRNA-DIHYDROURIDINE(47) SYNTHASE [NAD(P)(+)]-LIKE"/>
    <property type="match status" value="1"/>
</dbReference>
<dbReference type="PANTHER" id="PTHR45846:SF1">
    <property type="entry name" value="TRNA-DIHYDROURIDINE(47) SYNTHASE [NAD(P)(+)]-LIKE"/>
    <property type="match status" value="1"/>
</dbReference>
<dbReference type="Pfam" id="PF01207">
    <property type="entry name" value="Dus"/>
    <property type="match status" value="1"/>
</dbReference>
<dbReference type="SUPFAM" id="SSF51395">
    <property type="entry name" value="FMN-linked oxidoreductases"/>
    <property type="match status" value="1"/>
</dbReference>
<dbReference type="PROSITE" id="PS01136">
    <property type="entry name" value="UPF0034"/>
    <property type="match status" value="1"/>
</dbReference>
<dbReference type="PROSITE" id="PS50103">
    <property type="entry name" value="ZF_C3H1"/>
    <property type="match status" value="2"/>
</dbReference>